<name>DIB1_YEAST</name>
<sequence length="143" mass="16776">MASVLLPQLRTGWHVDQAIVTETKRLVVIRFGRKNDRQCMIMDELLSSIAERVRNFAVIYLCDIDEVSDFDEMYELTDPMTVMFFYHNKHMMCDFGTGNNNKLNFIVDDKQEMIDILETIFRGARKNKGLVVSPYDYNHKRVS</sequence>
<protein>
    <recommendedName>
        <fullName>Spliceosomal protein DIB1</fullName>
    </recommendedName>
</protein>
<reference key="1">
    <citation type="journal article" date="1997" name="J. Cell Biol.">
        <title>Fission yeast dim1(+) encodes a functionally conserved polypeptide essential for mitosis.</title>
        <authorList>
            <person name="Berry L.D."/>
            <person name="Gould K.L."/>
        </authorList>
    </citation>
    <scope>NUCLEOTIDE SEQUENCE [GENOMIC DNA]</scope>
</reference>
<reference key="2">
    <citation type="journal article" date="1997" name="Nature">
        <title>The nucleotide sequence of Saccharomyces cerevisiae chromosome XVI.</title>
        <authorList>
            <person name="Bussey H."/>
            <person name="Storms R.K."/>
            <person name="Ahmed A."/>
            <person name="Albermann K."/>
            <person name="Allen E."/>
            <person name="Ansorge W."/>
            <person name="Araujo R."/>
            <person name="Aparicio A."/>
            <person name="Barrell B.G."/>
            <person name="Badcock K."/>
            <person name="Benes V."/>
            <person name="Botstein D."/>
            <person name="Bowman S."/>
            <person name="Brueckner M."/>
            <person name="Carpenter J."/>
            <person name="Cherry J.M."/>
            <person name="Chung E."/>
            <person name="Churcher C.M."/>
            <person name="Coster F."/>
            <person name="Davis K."/>
            <person name="Davis R.W."/>
            <person name="Dietrich F.S."/>
            <person name="Delius H."/>
            <person name="DiPaolo T."/>
            <person name="Dubois E."/>
            <person name="Duesterhoeft A."/>
            <person name="Duncan M."/>
            <person name="Floeth M."/>
            <person name="Fortin N."/>
            <person name="Friesen J.D."/>
            <person name="Fritz C."/>
            <person name="Goffeau A."/>
            <person name="Hall J."/>
            <person name="Hebling U."/>
            <person name="Heumann K."/>
            <person name="Hilbert H."/>
            <person name="Hillier L.W."/>
            <person name="Hunicke-Smith S."/>
            <person name="Hyman R.W."/>
            <person name="Johnston M."/>
            <person name="Kalman S."/>
            <person name="Kleine K."/>
            <person name="Komp C."/>
            <person name="Kurdi O."/>
            <person name="Lashkari D."/>
            <person name="Lew H."/>
            <person name="Lin A."/>
            <person name="Lin D."/>
            <person name="Louis E.J."/>
            <person name="Marathe R."/>
            <person name="Messenguy F."/>
            <person name="Mewes H.-W."/>
            <person name="Mirtipati S."/>
            <person name="Moestl D."/>
            <person name="Mueller-Auer S."/>
            <person name="Namath A."/>
            <person name="Nentwich U."/>
            <person name="Oefner P."/>
            <person name="Pearson D."/>
            <person name="Petel F.X."/>
            <person name="Pohl T.M."/>
            <person name="Purnelle B."/>
            <person name="Rajandream M.A."/>
            <person name="Rechmann S."/>
            <person name="Rieger M."/>
            <person name="Riles L."/>
            <person name="Roberts D."/>
            <person name="Schaefer M."/>
            <person name="Scharfe M."/>
            <person name="Scherens B."/>
            <person name="Schramm S."/>
            <person name="Schroeder M."/>
            <person name="Sdicu A.-M."/>
            <person name="Tettelin H."/>
            <person name="Urrestarazu L.A."/>
            <person name="Ushinsky S."/>
            <person name="Vierendeels F."/>
            <person name="Vissers S."/>
            <person name="Voss H."/>
            <person name="Walsh S.V."/>
            <person name="Wambutt R."/>
            <person name="Wang Y."/>
            <person name="Wedler E."/>
            <person name="Wedler H."/>
            <person name="Winnett E."/>
            <person name="Zhong W.-W."/>
            <person name="Zollner A."/>
            <person name="Vo D.H."/>
            <person name="Hani J."/>
        </authorList>
    </citation>
    <scope>NUCLEOTIDE SEQUENCE [LARGE SCALE GENOMIC DNA]</scope>
    <source>
        <strain>ATCC 204508 / S288c</strain>
    </source>
</reference>
<reference key="3">
    <citation type="journal article" date="2014" name="G3 (Bethesda)">
        <title>The reference genome sequence of Saccharomyces cerevisiae: Then and now.</title>
        <authorList>
            <person name="Engel S.R."/>
            <person name="Dietrich F.S."/>
            <person name="Fisk D.G."/>
            <person name="Binkley G."/>
            <person name="Balakrishnan R."/>
            <person name="Costanzo M.C."/>
            <person name="Dwight S.S."/>
            <person name="Hitz B.C."/>
            <person name="Karra K."/>
            <person name="Nash R.S."/>
            <person name="Weng S."/>
            <person name="Wong E.D."/>
            <person name="Lloyd P."/>
            <person name="Skrzypek M.S."/>
            <person name="Miyasato S.R."/>
            <person name="Simison M."/>
            <person name="Cherry J.M."/>
        </authorList>
    </citation>
    <scope>GENOME REANNOTATION</scope>
    <source>
        <strain>ATCC 204508 / S288c</strain>
    </source>
</reference>
<reference key="4">
    <citation type="journal article" date="2007" name="Genome Res.">
        <title>Approaching a complete repository of sequence-verified protein-encoding clones for Saccharomyces cerevisiae.</title>
        <authorList>
            <person name="Hu Y."/>
            <person name="Rolfs A."/>
            <person name="Bhullar B."/>
            <person name="Murthy T.V.S."/>
            <person name="Zhu C."/>
            <person name="Berger M.F."/>
            <person name="Camargo A.A."/>
            <person name="Kelley F."/>
            <person name="McCarron S."/>
            <person name="Jepson D."/>
            <person name="Richardson A."/>
            <person name="Raphael J."/>
            <person name="Moreira D."/>
            <person name="Taycher E."/>
            <person name="Zuo D."/>
            <person name="Mohr S."/>
            <person name="Kane M.F."/>
            <person name="Williamson J."/>
            <person name="Simpson A.J.G."/>
            <person name="Bulyk M.L."/>
            <person name="Harlow E."/>
            <person name="Marsischky G."/>
            <person name="Kolodner R.D."/>
            <person name="LaBaer J."/>
        </authorList>
    </citation>
    <scope>NUCLEOTIDE SEQUENCE [GENOMIC DNA]</scope>
    <source>
        <strain>ATCC 204508 / S288c</strain>
    </source>
</reference>
<reference key="5">
    <citation type="journal article" date="1999" name="EMBO J.">
        <title>Identification by mass spectrometry and functional analysis of novel proteins of the yeast [U4/U6.U5] tri-snRNP.</title>
        <authorList>
            <person name="Gottschalk A."/>
            <person name="Neubauer G."/>
            <person name="Banroques J."/>
            <person name="Mann M."/>
            <person name="Luehrmann R."/>
            <person name="Fabrizio P."/>
        </authorList>
    </citation>
    <scope>SUBUNIT</scope>
    <scope>IDENTIFICATION IN THE U4/U5/U6 TRI-SNRNP COMPLEX</scope>
    <scope>IDENTIFICATION BY MASS SPECTROMETRY</scope>
</reference>
<reference key="6">
    <citation type="journal article" date="2012" name="Proc. Natl. Acad. Sci. U.S.A.">
        <title>N-terminal acetylome analyses and functional insights of the N-terminal acetyltransferase NatB.</title>
        <authorList>
            <person name="Van Damme P."/>
            <person name="Lasa M."/>
            <person name="Polevoda B."/>
            <person name="Gazquez C."/>
            <person name="Elosegui-Artola A."/>
            <person name="Kim D.S."/>
            <person name="De Juan-Pardo E."/>
            <person name="Demeyer K."/>
            <person name="Hole K."/>
            <person name="Larrea E."/>
            <person name="Timmerman E."/>
            <person name="Prieto J."/>
            <person name="Arnesen T."/>
            <person name="Sherman F."/>
            <person name="Gevaert K."/>
            <person name="Aldabe R."/>
        </authorList>
    </citation>
    <scope>ACETYLATION [LARGE SCALE ANALYSIS] AT ALA-2</scope>
    <scope>CLEAVAGE OF INITIATOR METHIONINE [LARGE SCALE ANALYSIS]</scope>
    <scope>IDENTIFICATION BY MASS SPECTROMETRY [LARGE SCALE ANALYSIS]</scope>
</reference>
<proteinExistence type="evidence at protein level"/>
<comment type="function">
    <text>Essential role in pre-mRNA splicing. Also essential for entry into mitosis (G2/M progression) as well as for chromosome segregation during mitosis.</text>
</comment>
<comment type="subunit">
    <text evidence="1">Component of the U4/U6-U5 tri-snRNP complex composed of the U4, U6 and U5 snRNAs and at least PRP3, PRP4, PRP6, PRP8, PRP18, PRP31, PRP38, SNU13, SNU23, SNU66, SNU114, SPP381, SMB1, SMD1, SMD2, SMD3, SMX2, SMX3, LSM2, LSM3, LSM4, LSM5, LSM6, LSM7, LSM8, BRR2 and DIB1.</text>
</comment>
<comment type="interaction">
    <interactant intactId="EBI-166">
        <id>Q06819</id>
    </interactant>
    <interactant intactId="EBI-227">
        <id>P19735</id>
        <label>PRP6</label>
    </interactant>
    <organismsDiffer>false</organismsDiffer>
    <experiments>4</experiments>
</comment>
<comment type="subcellular location">
    <subcellularLocation>
        <location>Nucleus</location>
    </subcellularLocation>
</comment>
<comment type="similarity">
    <text evidence="2">Belongs to the DIM1 family.</text>
</comment>
<keyword id="KW-0002">3D-structure</keyword>
<keyword id="KW-0007">Acetylation</keyword>
<keyword id="KW-0507">mRNA processing</keyword>
<keyword id="KW-0508">mRNA splicing</keyword>
<keyword id="KW-0539">Nucleus</keyword>
<keyword id="KW-1185">Reference proteome</keyword>
<accession>Q06819</accession>
<accession>D6W484</accession>
<gene>
    <name type="primary">DIB1</name>
    <name type="synonym">CDH1</name>
    <name type="synonym">SNU16</name>
    <name type="ordered locus">YPR082C</name>
    <name type="ORF">P9513.12</name>
</gene>
<dbReference type="EMBL" id="U51033">
    <property type="protein sequence ID" value="AAB68131.1"/>
    <property type="molecule type" value="Genomic_DNA"/>
</dbReference>
<dbReference type="EMBL" id="AY558054">
    <property type="protein sequence ID" value="AAS56380.1"/>
    <property type="molecule type" value="Genomic_DNA"/>
</dbReference>
<dbReference type="EMBL" id="BK006949">
    <property type="protein sequence ID" value="DAA11500.1"/>
    <property type="molecule type" value="Genomic_DNA"/>
</dbReference>
<dbReference type="PIR" id="S69068">
    <property type="entry name" value="S69068"/>
</dbReference>
<dbReference type="RefSeq" id="NP_015407.1">
    <property type="nucleotide sequence ID" value="NM_001184179.1"/>
</dbReference>
<dbReference type="PDB" id="3JCM">
    <property type="method" value="EM"/>
    <property type="resolution" value="3.80 A"/>
    <property type="chains" value="L=1-143"/>
</dbReference>
<dbReference type="PDB" id="5GAN">
    <property type="method" value="EM"/>
    <property type="resolution" value="3.60 A"/>
    <property type="chains" value="D=1-143"/>
</dbReference>
<dbReference type="PDB" id="5GAP">
    <property type="method" value="EM"/>
    <property type="resolution" value="3.60 A"/>
    <property type="chains" value="D=1-143"/>
</dbReference>
<dbReference type="PDB" id="5NRL">
    <property type="method" value="EM"/>
    <property type="resolution" value="7.20 A"/>
    <property type="chains" value="D=1-143"/>
</dbReference>
<dbReference type="PDB" id="5ZWM">
    <property type="method" value="EM"/>
    <property type="resolution" value="3.40 A"/>
    <property type="chains" value="E=1-143"/>
</dbReference>
<dbReference type="PDB" id="5ZWO">
    <property type="method" value="EM"/>
    <property type="resolution" value="3.90 A"/>
    <property type="chains" value="E=1-143"/>
</dbReference>
<dbReference type="PDBsum" id="3JCM"/>
<dbReference type="PDBsum" id="5GAN"/>
<dbReference type="PDBsum" id="5GAP"/>
<dbReference type="PDBsum" id="5NRL"/>
<dbReference type="PDBsum" id="5ZWM"/>
<dbReference type="PDBsum" id="5ZWO"/>
<dbReference type="EMDB" id="EMD-3683"/>
<dbReference type="EMDB" id="EMD-6972"/>
<dbReference type="EMDB" id="EMD-6974"/>
<dbReference type="EMDB" id="EMD-8012"/>
<dbReference type="EMDB" id="EMD-8014"/>
<dbReference type="SMR" id="Q06819"/>
<dbReference type="BioGRID" id="36253">
    <property type="interactions" value="166"/>
</dbReference>
<dbReference type="ComplexPortal" id="CPX-25">
    <property type="entry name" value="U4/U6.U5 tri-small nuclear ribonucleoprotein complex"/>
</dbReference>
<dbReference type="ComplexPortal" id="CPX-29">
    <property type="entry name" value="U5 small nuclear ribonucleoprotein complex"/>
</dbReference>
<dbReference type="DIP" id="DIP-1289N"/>
<dbReference type="FunCoup" id="Q06819">
    <property type="interactions" value="1079"/>
</dbReference>
<dbReference type="IntAct" id="Q06819">
    <property type="interactions" value="28"/>
</dbReference>
<dbReference type="MINT" id="Q06819"/>
<dbReference type="STRING" id="4932.YPR082C"/>
<dbReference type="iPTMnet" id="Q06819"/>
<dbReference type="PaxDb" id="4932-YPR082C"/>
<dbReference type="PeptideAtlas" id="Q06819"/>
<dbReference type="EnsemblFungi" id="YPR082C_mRNA">
    <property type="protein sequence ID" value="YPR082C"/>
    <property type="gene ID" value="YPR082C"/>
</dbReference>
<dbReference type="GeneID" id="856197"/>
<dbReference type="KEGG" id="sce:YPR082C"/>
<dbReference type="AGR" id="SGD:S000006286"/>
<dbReference type="SGD" id="S000006286">
    <property type="gene designation" value="DIB1"/>
</dbReference>
<dbReference type="VEuPathDB" id="FungiDB:YPR082C"/>
<dbReference type="eggNOG" id="KOG3414">
    <property type="taxonomic scope" value="Eukaryota"/>
</dbReference>
<dbReference type="GeneTree" id="ENSGT00390000010779"/>
<dbReference type="HOGENOM" id="CLU_117348_0_0_1"/>
<dbReference type="InParanoid" id="Q06819"/>
<dbReference type="OMA" id="GMYELYD"/>
<dbReference type="OrthoDB" id="147752at2759"/>
<dbReference type="BioCyc" id="YEAST:G3O-34226-MONOMER"/>
<dbReference type="BioGRID-ORCS" id="856197">
    <property type="hits" value="10 hits in 10 CRISPR screens"/>
</dbReference>
<dbReference type="EvolutionaryTrace" id="Q06819"/>
<dbReference type="PRO" id="PR:Q06819"/>
<dbReference type="Proteomes" id="UP000002311">
    <property type="component" value="Chromosome XVI"/>
</dbReference>
<dbReference type="RNAct" id="Q06819">
    <property type="molecule type" value="protein"/>
</dbReference>
<dbReference type="GO" id="GO:0005634">
    <property type="term" value="C:nucleus"/>
    <property type="evidence" value="ECO:0000303"/>
    <property type="project" value="ComplexPortal"/>
</dbReference>
<dbReference type="GO" id="GO:0005681">
    <property type="term" value="C:spliceosomal complex"/>
    <property type="evidence" value="ECO:0000318"/>
    <property type="project" value="GO_Central"/>
</dbReference>
<dbReference type="GO" id="GO:0046540">
    <property type="term" value="C:U4/U6 x U5 tri-snRNP complex"/>
    <property type="evidence" value="ECO:0000314"/>
    <property type="project" value="SGD"/>
</dbReference>
<dbReference type="GO" id="GO:0005682">
    <property type="term" value="C:U5 snRNP"/>
    <property type="evidence" value="ECO:0000314"/>
    <property type="project" value="SGD"/>
</dbReference>
<dbReference type="GO" id="GO:0000398">
    <property type="term" value="P:mRNA splicing, via spliceosome"/>
    <property type="evidence" value="ECO:0000315"/>
    <property type="project" value="SGD"/>
</dbReference>
<dbReference type="CDD" id="cd02954">
    <property type="entry name" value="DIM1"/>
    <property type="match status" value="1"/>
</dbReference>
<dbReference type="FunFam" id="3.40.30.10:FF:000004">
    <property type="entry name" value="Spliceosomal protein DIB1"/>
    <property type="match status" value="1"/>
</dbReference>
<dbReference type="Gene3D" id="3.40.30.10">
    <property type="entry name" value="Glutaredoxin"/>
    <property type="match status" value="1"/>
</dbReference>
<dbReference type="InterPro" id="IPR004123">
    <property type="entry name" value="Dim1"/>
</dbReference>
<dbReference type="InterPro" id="IPR036249">
    <property type="entry name" value="Thioredoxin-like_sf"/>
</dbReference>
<dbReference type="PANTHER" id="PTHR12052:SF5">
    <property type="entry name" value="THIOREDOXIN-LIKE PROTEIN 4A"/>
    <property type="match status" value="1"/>
</dbReference>
<dbReference type="PANTHER" id="PTHR12052">
    <property type="entry name" value="THIOREDOXIN-LIKE PROTEN 4A, 4B"/>
    <property type="match status" value="1"/>
</dbReference>
<dbReference type="Pfam" id="PF02966">
    <property type="entry name" value="DIM1"/>
    <property type="match status" value="1"/>
</dbReference>
<dbReference type="PIRSF" id="PIRSF017199">
    <property type="entry name" value="mRNA_splic_U5"/>
    <property type="match status" value="1"/>
</dbReference>
<dbReference type="SMART" id="SM01410">
    <property type="entry name" value="DIM1"/>
    <property type="match status" value="1"/>
</dbReference>
<dbReference type="SUPFAM" id="SSF52833">
    <property type="entry name" value="Thioredoxin-like"/>
    <property type="match status" value="1"/>
</dbReference>
<feature type="initiator methionine" description="Removed" evidence="3">
    <location>
        <position position="1"/>
    </location>
</feature>
<feature type="chain" id="PRO_0000218286" description="Spliceosomal protein DIB1">
    <location>
        <begin position="2"/>
        <end position="143"/>
    </location>
</feature>
<feature type="modified residue" description="N-acetylalanine" evidence="3">
    <location>
        <position position="2"/>
    </location>
</feature>
<evidence type="ECO:0000269" key="1">
    <source>
    </source>
</evidence>
<evidence type="ECO:0000305" key="2"/>
<evidence type="ECO:0007744" key="3">
    <source>
    </source>
</evidence>
<organism>
    <name type="scientific">Saccharomyces cerevisiae (strain ATCC 204508 / S288c)</name>
    <name type="common">Baker's yeast</name>
    <dbReference type="NCBI Taxonomy" id="559292"/>
    <lineage>
        <taxon>Eukaryota</taxon>
        <taxon>Fungi</taxon>
        <taxon>Dikarya</taxon>
        <taxon>Ascomycota</taxon>
        <taxon>Saccharomycotina</taxon>
        <taxon>Saccharomycetes</taxon>
        <taxon>Saccharomycetales</taxon>
        <taxon>Saccharomycetaceae</taxon>
        <taxon>Saccharomyces</taxon>
    </lineage>
</organism>